<gene>
    <name evidence="6" type="primary">fkp</name>
    <name evidence="7" type="ORF">HMPREF2533_03026</name>
</gene>
<feature type="chain" id="PRO_0000461653" description="L-fucokinase/L-fucose-1-P guanylyltransferase">
    <location>
        <begin position="1"/>
        <end position="949"/>
    </location>
</feature>
<feature type="region of interest" description="Fucose-1-phosphate guanylyltransferase" evidence="5">
    <location>
        <begin position="25"/>
        <end position="191"/>
    </location>
</feature>
<feature type="region of interest" description="L-fucokinase" evidence="5">
    <location>
        <begin position="559"/>
        <end position="949"/>
    </location>
</feature>
<feature type="mutagenesis site" description="Almost complete loss of fucose-1-phosphate guanylyltransferase activity." evidence="2">
    <original>G</original>
    <variation>A</variation>
    <location>
        <position position="76"/>
    </location>
</feature>
<feature type="mutagenesis site" description="Almost complete loss of fucose-1-phosphate guanylyltransferase activity." evidence="2">
    <original>R</original>
    <variation>A</variation>
    <location>
        <position position="80"/>
    </location>
</feature>
<feature type="mutagenesis site" description="Almost complete loss of fucose-1-phosphate guanylyltransferase activity." evidence="2">
    <original>G</original>
    <variation>A</variation>
    <location>
        <position position="88"/>
    </location>
</feature>
<feature type="mutagenesis site" description="Almost complete loss of fucose-1-phosphate guanylyltransferase activity." evidence="2">
    <original>K</original>
    <variation>A</variation>
    <location>
        <position position="89"/>
    </location>
</feature>
<feature type="mutagenesis site" description="Almost complete loss of fucokinase activity." evidence="2">
    <original>R</original>
    <variation>A</variation>
    <location>
        <position position="592"/>
    </location>
</feature>
<feature type="mutagenesis site" description="Almost complete loss of fucokinase activity." evidence="2">
    <original>D</original>
    <variation>A</variation>
    <location>
        <position position="594"/>
    </location>
</feature>
<feature type="mutagenesis site" description="Almost complete loss of fucokinase activity." evidence="2">
    <original>G</original>
    <variation>A</variation>
    <location>
        <position position="597"/>
    </location>
</feature>
<feature type="mutagenesis site" description="Almost complete loss of fucokinase activity." evidence="2">
    <original>G</original>
    <variation>A</variation>
    <location>
        <position position="598"/>
    </location>
</feature>
<feature type="mutagenesis site" description="Almost complete loss of fucokinase activity." evidence="2">
    <original>D</original>
    <variation>A</variation>
    <location>
        <position position="601"/>
    </location>
</feature>
<feature type="mutagenesis site" description="Loss of fucokinase activity." evidence="2">
    <original>G</original>
    <variation>A</variation>
    <location>
        <position position="713"/>
    </location>
</feature>
<feature type="mutagenesis site" description="Loss of fucokinase activity." evidence="2">
    <original>S</original>
    <variation>A</variation>
    <location>
        <position position="714"/>
    </location>
</feature>
<feature type="mutagenesis site" description="Loss of fucokinase activity." evidence="2">
    <original>G</original>
    <variation>A</variation>
    <location>
        <position position="715"/>
    </location>
</feature>
<feature type="mutagenesis site" description="Loss of fucokinase activity." evidence="2">
    <original>G</original>
    <variation>A</variation>
    <location>
        <position position="717"/>
    </location>
</feature>
<feature type="mutagenesis site" description="Loss of fucokinase activity." evidence="2">
    <original>S</original>
    <variation>A</variation>
    <location>
        <position position="719"/>
    </location>
</feature>
<feature type="mutagenesis site" description="Loss of fucokinase activity." evidence="2">
    <original>S</original>
    <variation>A</variation>
    <location>
        <position position="720"/>
    </location>
</feature>
<feature type="mutagenesis site" description="Loss of fucokinase activity." evidence="2">
    <original>A</original>
    <variation>R</variation>
    <location>
        <position position="723"/>
    </location>
</feature>
<feature type="mutagenesis site" description="Almost complete loss of fucokinase activity." evidence="2">
    <original>G</original>
    <variation>A</variation>
    <location>
        <position position="758"/>
    </location>
</feature>
<feature type="mutagenesis site" description="Almost complete loss of fucokinase activity." evidence="2">
    <original>G</original>
    <variation>A</variation>
    <location>
        <position position="759"/>
    </location>
</feature>
<feature type="mutagenesis site" description="Almost complete loss of fucokinase activity." evidence="2">
    <original>Q</original>
    <variation>A</variation>
    <location>
        <position position="761"/>
    </location>
</feature>
<feature type="mutagenesis site" description="Almost complete loss of fucokinase activity." evidence="2">
    <original>D</original>
    <variation>A</variation>
    <location>
        <position position="762"/>
    </location>
</feature>
<feature type="mutagenesis site" description="Almost complete loss of fucokinase activity." evidence="2">
    <original>G</original>
    <variation>A</variation>
    <location>
        <position position="899"/>
    </location>
</feature>
<feature type="mutagenesis site" description="Almost complete loss of fucokinase activity." evidence="2">
    <original>G</original>
    <variation>A</variation>
    <location>
        <position position="901"/>
    </location>
</feature>
<reference key="1">
    <citation type="journal article" date="2005" name="Science">
        <title>Human symbionts use a host-like pathway for surface fucosylation.</title>
        <authorList>
            <person name="Coyne M.J."/>
            <person name="Reinap B."/>
            <person name="Lee M.M."/>
            <person name="Comstock L.E."/>
        </authorList>
    </citation>
    <scope>NUCLEOTIDE SEQUENCE [GENOMIC DNA]</scope>
    <source>
        <strain>9343</strain>
    </source>
</reference>
<reference key="2">
    <citation type="submission" date="2016-03" db="EMBL/GenBank/DDBJ databases">
        <authorList>
            <person name="Mitreva M."/>
            <person name="Pepin K.H."/>
            <person name="Mihindukulasuriya K.A."/>
            <person name="Fulton R."/>
            <person name="Fronick C."/>
            <person name="O'Laughlin M."/>
            <person name="Miner T."/>
            <person name="Herter B."/>
            <person name="Rosa B.A."/>
            <person name="Cordes M."/>
            <person name="Tomlinson C."/>
            <person name="Wollam A."/>
            <person name="Palsikar V.B."/>
            <person name="Mardis E.R."/>
            <person name="Wilson R.K."/>
        </authorList>
    </citation>
    <scope>NUCLEOTIDE SEQUENCE [LARGE SCALE GENOMIC DNA]</scope>
    <source>
        <strain>KLE1758</strain>
    </source>
</reference>
<reference evidence="8" key="3">
    <citation type="journal article" date="2019" name="Protein Cell">
        <title>Cryo-EM structure of L-fucokinase/GDP-fucose pyrophosphorylase (FKP) in Bacteroides fragilis.</title>
        <authorList>
            <person name="Liu Y."/>
            <person name="Hu H."/>
            <person name="Wang J."/>
            <person name="Zhou Q."/>
            <person name="Wu P."/>
            <person name="Yan N."/>
            <person name="Wang H.W."/>
            <person name="Wu J.W."/>
            <person name="Sun L."/>
        </authorList>
    </citation>
    <scope>STRUCTURE BY ELECTRON MICROSCOPY (4.20 ANGSTROMS)</scope>
    <scope>FUNCTION</scope>
    <scope>CATALYTIC ACTIVITY</scope>
    <scope>BIOPHYSICOCHEMICAL PROPERTIES</scope>
    <scope>SUBUNIT</scope>
    <scope>DOMAIN</scope>
    <scope>MUTAGENESIS OF GLY-76; ARG-80; GLY-88; LYS-89; ARG-592; ASP-594; GLY-597; GLY-598; ASP-601; GLY-713; SER-714; GLY-715; GLY-717; SER-719; SER-720; ALA-723; GLY-758; GLY-759; GLN-761; ASP-762; GLY-899 AND GLY-901</scope>
    <source>
        <strain>9343</strain>
    </source>
</reference>
<name>FKP_BACFG</name>
<organism>
    <name type="scientific">Bacteroides fragilis</name>
    <dbReference type="NCBI Taxonomy" id="817"/>
    <lineage>
        <taxon>Bacteria</taxon>
        <taxon>Pseudomonadati</taxon>
        <taxon>Bacteroidota</taxon>
        <taxon>Bacteroidia</taxon>
        <taxon>Bacteroidales</taxon>
        <taxon>Bacteroidaceae</taxon>
        <taxon>Bacteroides</taxon>
    </lineage>
</organism>
<keyword id="KW-0002">3D-structure</keyword>
<keyword id="KW-0067">ATP-binding</keyword>
<keyword id="KW-0418">Kinase</keyword>
<keyword id="KW-0460">Magnesium</keyword>
<keyword id="KW-0464">Manganese</keyword>
<keyword id="KW-0511">Multifunctional enzyme</keyword>
<keyword id="KW-0547">Nucleotide-binding</keyword>
<keyword id="KW-0548">Nucleotidyltransferase</keyword>
<keyword id="KW-0808">Transferase</keyword>
<dbReference type="EC" id="2.7.7.30" evidence="2"/>
<dbReference type="EC" id="2.7.1.52" evidence="2"/>
<dbReference type="EMBL" id="AY849806">
    <property type="protein sequence ID" value="AAX45030.1"/>
    <property type="molecule type" value="Genomic_DNA"/>
</dbReference>
<dbReference type="EMBL" id="LTZK01000094">
    <property type="protein sequence ID" value="KXU43832.1"/>
    <property type="molecule type" value="Genomic_DNA"/>
</dbReference>
<dbReference type="RefSeq" id="WP_010993080.1">
    <property type="nucleotide sequence ID" value="NZ_QSGL01000003.1"/>
</dbReference>
<dbReference type="PDB" id="5YYS">
    <property type="method" value="EM"/>
    <property type="resolution" value="4.20 A"/>
    <property type="chains" value="A/B/C/D=1-949"/>
</dbReference>
<dbReference type="PDB" id="9IIP">
    <property type="method" value="X-ray"/>
    <property type="resolution" value="2.45 A"/>
    <property type="chains" value="A=531-949"/>
</dbReference>
<dbReference type="PDB" id="9IIS">
    <property type="method" value="X-ray"/>
    <property type="resolution" value="2.36 A"/>
    <property type="chains" value="A=1-496"/>
</dbReference>
<dbReference type="PDB" id="9IIT">
    <property type="method" value="X-ray"/>
    <property type="resolution" value="2.30 A"/>
    <property type="chains" value="A/B=1-949"/>
</dbReference>
<dbReference type="PDBsum" id="5YYS"/>
<dbReference type="PDBsum" id="9IIP"/>
<dbReference type="PDBsum" id="9IIS"/>
<dbReference type="PDBsum" id="9IIT"/>
<dbReference type="EMDB" id="EMD-6859"/>
<dbReference type="SMR" id="Q58T34"/>
<dbReference type="PATRIC" id="fig|817.69.peg.2996"/>
<dbReference type="BRENDA" id="2.7.1.52">
    <property type="organism ID" value="755"/>
</dbReference>
<dbReference type="BRENDA" id="2.7.7.30">
    <property type="organism ID" value="755"/>
</dbReference>
<dbReference type="GO" id="GO:0005524">
    <property type="term" value="F:ATP binding"/>
    <property type="evidence" value="ECO:0007669"/>
    <property type="project" value="UniProtKB-KW"/>
</dbReference>
<dbReference type="GO" id="GO:0050201">
    <property type="term" value="F:fucokinase activity"/>
    <property type="evidence" value="ECO:0007669"/>
    <property type="project" value="TreeGrafter"/>
</dbReference>
<dbReference type="GO" id="GO:0016779">
    <property type="term" value="F:nucleotidyltransferase activity"/>
    <property type="evidence" value="ECO:0007669"/>
    <property type="project" value="UniProtKB-KW"/>
</dbReference>
<dbReference type="GO" id="GO:0042352">
    <property type="term" value="P:GDP-L-fucose salvage"/>
    <property type="evidence" value="ECO:0007669"/>
    <property type="project" value="TreeGrafter"/>
</dbReference>
<dbReference type="Gene3D" id="3.30.230.120">
    <property type="match status" value="1"/>
</dbReference>
<dbReference type="InterPro" id="IPR012887">
    <property type="entry name" value="GDP_fucose_pyrophosphorylase"/>
</dbReference>
<dbReference type="InterPro" id="IPR052203">
    <property type="entry name" value="GHMP_Kinase-Related"/>
</dbReference>
<dbReference type="InterPro" id="IPR013750">
    <property type="entry name" value="GHMP_kinase_C_dom"/>
</dbReference>
<dbReference type="InterPro" id="IPR036554">
    <property type="entry name" value="GHMP_kinase_C_sf"/>
</dbReference>
<dbReference type="InterPro" id="IPR006204">
    <property type="entry name" value="GHMP_kinase_N_dom"/>
</dbReference>
<dbReference type="InterPro" id="IPR001174">
    <property type="entry name" value="HddA/FKP"/>
</dbReference>
<dbReference type="InterPro" id="IPR020568">
    <property type="entry name" value="Ribosomal_Su5_D2-typ_SF"/>
</dbReference>
<dbReference type="NCBIfam" id="NF009948">
    <property type="entry name" value="PRK13412.1"/>
    <property type="match status" value="1"/>
</dbReference>
<dbReference type="PANTHER" id="PTHR32463">
    <property type="entry name" value="L-FUCOSE KINASE"/>
    <property type="match status" value="1"/>
</dbReference>
<dbReference type="PANTHER" id="PTHR32463:SF0">
    <property type="entry name" value="L-FUCOSE KINASE"/>
    <property type="match status" value="1"/>
</dbReference>
<dbReference type="Pfam" id="PF07959">
    <property type="entry name" value="Fucose_pyrophosphorylase"/>
    <property type="match status" value="1"/>
</dbReference>
<dbReference type="Pfam" id="PF08544">
    <property type="entry name" value="GHMP_kinases_C"/>
    <property type="match status" value="1"/>
</dbReference>
<dbReference type="Pfam" id="PF00288">
    <property type="entry name" value="GHMP_kinases_N"/>
    <property type="match status" value="1"/>
</dbReference>
<dbReference type="PRINTS" id="PR00960">
    <property type="entry name" value="LMBPPROTEIN"/>
</dbReference>
<dbReference type="SUPFAM" id="SSF55060">
    <property type="entry name" value="GHMP Kinase, C-terminal domain"/>
    <property type="match status" value="1"/>
</dbReference>
<dbReference type="SUPFAM" id="SSF54211">
    <property type="entry name" value="Ribosomal protein S5 domain 2-like"/>
    <property type="match status" value="1"/>
</dbReference>
<proteinExistence type="evidence at protein level"/>
<accession>Q58T34</accession>
<protein>
    <recommendedName>
        <fullName evidence="5">L-fucokinase/L-fucose-1-P guanylyltransferase</fullName>
    </recommendedName>
    <alternativeName>
        <fullName evidence="3">L-fucokinase/GDP-fucose pyrophosphorylase</fullName>
        <shortName evidence="3">FKP</shortName>
    </alternativeName>
    <domain>
        <recommendedName>
            <fullName evidence="5">Fucose-1-phosphate guanylyltransferase</fullName>
            <ecNumber evidence="2">2.7.7.30</ecNumber>
        </recommendedName>
        <alternativeName>
            <fullName evidence="3">GDP-fucose pyrophosphorylase</fullName>
        </alternativeName>
    </domain>
    <domain>
        <recommendedName>
            <fullName evidence="3">L-fucokinase</fullName>
            <ecNumber evidence="2">2.7.1.52</ecNumber>
        </recommendedName>
    </domain>
</protein>
<sequence>MQKLLSLPSNLVQSFHELERVNRTDWFCTSDPVGKKLGSGGGTSWLLEECYNEYSDGATFGEWLEKEKRILLHAGGQSRRLPGYAPSGKILTPVPVFRWERGQHLGQNLLSLQLPLYEKIMSLAPDKLHTLIASGDVYIRSEKPLQSIPEADVVCYGLWVDPSLATHHGVFASDRKHPEQLDFMLQKPSLAELESLSKTHLFLMDIGIWLLSDRAVEILMKRSHKESSEELKYYDLYSDFGLALGTHPRIEDEEVNTLSVAILPLPGGEFYHYGTSKELISSTLSVQNKVYDQRRIMHRKVKPNPAMFVQNAVVRIPLCAENADLWIENSHIGPKWKIASRHIITGVPENDWSLAVPAGVCVDVVPMGDKGFVARPYGLDDVFKGDLRDSKTTLTGIPFGEWMSKRGLSYTDLKGRTDDLQAVSVFPMVNSVEELGLVLRWMLSEPELEEGKNIWLRSEHFSADEISAGANLKRLYAQREEFRKGNWKALAVNHEKSVFYQLDLADAAEDFVRLGLDMPELLPEDALQMSRIHNRMLRARILKLDGKDYRPEEQAAFDLLRDGLLDGISNRKSTPKLDVYSDQIVWGRSPVRIDMAGGWTDTPPYSLYSGGNVVNLAIELNGQPPLQVYVKPCKDFHIVLRSIDMGAMEIVSTFDELQDYKKIGSPFSIPKAALSLAGFAPAFSAVSYASLEEQLKDFGAGIEVTLLAAIPAGSGLGTSSILASTVLGAINDFCGLAWDKNEICQRTLVLEQLLTTGGGWQDQYGGVLQGVKLLQTEAGFAQSPLVRWLPDHLFTHPEYKDCHLLYYTGITRTAKGILAEIVSSMFLNSSLHLNLLSEMKAHALDMNEAIQRGSFVEFGRLVGKTWEQNKALDSGTNPPAVEAIIDLIKDYTLGYKLPGAGGGGYLYMVAKDPQAAVRIRKILTENAPNPRARFVEMTLSDKGFQVSRS</sequence>
<evidence type="ECO:0000250" key="1">
    <source>
        <dbReference type="UniProtKB" id="Q9LNJ9"/>
    </source>
</evidence>
<evidence type="ECO:0000269" key="2">
    <source>
    </source>
</evidence>
<evidence type="ECO:0000303" key="3">
    <source>
    </source>
</evidence>
<evidence type="ECO:0000305" key="4"/>
<evidence type="ECO:0000305" key="5">
    <source>
    </source>
</evidence>
<evidence type="ECO:0000312" key="6">
    <source>
        <dbReference type="EMBL" id="AAX45030.1"/>
    </source>
</evidence>
<evidence type="ECO:0000312" key="7">
    <source>
        <dbReference type="EMBL" id="KXU43832.1"/>
    </source>
</evidence>
<evidence type="ECO:0007744" key="8">
    <source>
        <dbReference type="PDB" id="5YYS"/>
    </source>
</evidence>
<comment type="function">
    <text evidence="2">Bifunctional enzyme involved in the salvage pathway of GDP-fucose synthesis. Catalyzes two successive reactions, the ATP-dependent phosphorylation of L-fucose to L-fucose 1-phosphate, and its guanylylation to GDP-L-fucose. GDP-fucose is an important fucose donor in the process of fucosylated oligosaccharides formation.</text>
</comment>
<comment type="catalytic activity">
    <reaction evidence="2">
        <text>L-fucose + ATP = beta-L-fucose 1-phosphate + ADP + H(+)</text>
        <dbReference type="Rhea" id="RHEA:13241"/>
        <dbReference type="ChEBI" id="CHEBI:2181"/>
        <dbReference type="ChEBI" id="CHEBI:15378"/>
        <dbReference type="ChEBI" id="CHEBI:30616"/>
        <dbReference type="ChEBI" id="CHEBI:57268"/>
        <dbReference type="ChEBI" id="CHEBI:456216"/>
        <dbReference type="EC" id="2.7.1.52"/>
    </reaction>
    <physiologicalReaction direction="left-to-right" evidence="5">
        <dbReference type="Rhea" id="RHEA:13242"/>
    </physiologicalReaction>
</comment>
<comment type="catalytic activity">
    <reaction evidence="2">
        <text>beta-L-fucose 1-phosphate + GTP + H(+) = GDP-beta-L-fucose + diphosphate</text>
        <dbReference type="Rhea" id="RHEA:13549"/>
        <dbReference type="ChEBI" id="CHEBI:15378"/>
        <dbReference type="ChEBI" id="CHEBI:33019"/>
        <dbReference type="ChEBI" id="CHEBI:37565"/>
        <dbReference type="ChEBI" id="CHEBI:57268"/>
        <dbReference type="ChEBI" id="CHEBI:57273"/>
        <dbReference type="EC" id="2.7.7.30"/>
    </reaction>
    <physiologicalReaction direction="left-to-right" evidence="5">
        <dbReference type="Rhea" id="RHEA:13550"/>
    </physiologicalReaction>
</comment>
<comment type="cofactor">
    <cofactor evidence="1">
        <name>Mn(2+)</name>
        <dbReference type="ChEBI" id="CHEBI:29035"/>
    </cofactor>
    <cofactor evidence="1">
        <name>Mg(2+)</name>
        <dbReference type="ChEBI" id="CHEBI:18420"/>
    </cofactor>
    <text evidence="1">The L-fucokinase activity absolutely requires divalent cations such as Mn(2+) and Mg(2+).</text>
</comment>
<comment type="cofactor">
    <cofactor evidence="1">
        <name>Mg(2+)</name>
        <dbReference type="ChEBI" id="CHEBI:18420"/>
    </cofactor>
    <text evidence="1">The GDP-fucose pyrophosphorylase activity also requires divalent cations, with a high preference for Mg(2+).</text>
</comment>
<comment type="biophysicochemical properties">
    <kinetics>
        <KM evidence="2">66.29 uM for L-fucose</KM>
        <KM evidence="2">32.95 uM for L-fucose 1-phosphate</KM>
        <text evidence="2">kcat is 0.39 sec(-1) for the fucokinase activity. kcat is 10.07 sec(-1) for the fucose-1-phosphate guanylyltransferase activity.</text>
    </kinetics>
</comment>
<comment type="subunit">
    <text evidence="2">Homotetramer.</text>
</comment>
<comment type="domain">
    <text evidence="2">Is composed of an N-terminal GDP-fucose pyrophosphorylase (fucose-1-phosphate guanylyltransferase) domain and a C-terminal fucokinase domain, connected by a linker.</text>
</comment>
<comment type="similarity">
    <text evidence="4">Belongs to the GHMP kinase family.</text>
</comment>